<accession>P68037</accession>
<accession>P51966</accession>
<accession>P70653</accession>
<accession>Q9HAV1</accession>
<reference key="1">
    <citation type="journal article" date="1996" name="Proc. Natl. Acad. Sci. U.S.A.">
        <title>Provirus integration into a gene encoding a ubiquitin-conjugating enzyme results in a placental defect and embryonic lethality.</title>
        <authorList>
            <person name="Harbers K."/>
            <person name="Mueller U."/>
            <person name="Grams A."/>
            <person name="Li E."/>
            <person name="Jaenisch R."/>
            <person name="Franz T."/>
        </authorList>
    </citation>
    <scope>NUCLEOTIDE SEQUENCE [MRNA]</scope>
    <source>
        <strain>BALB/cJ</strain>
        <tissue>Brain</tissue>
    </source>
</reference>
<reference key="2">
    <citation type="journal article" date="1995" name="Mamm. Genome">
        <title>A human ubiquitin conjugating enzyme, L-UBC, maps in the Alzheimer's disease locus on chromosome 14q24.3.</title>
        <authorList>
            <person name="Robinson P.A."/>
            <person name="Leek J.P."/>
            <person name="Thompson J."/>
            <person name="Carr I.M."/>
            <person name="Bailey A."/>
            <person name="Moynihan T.P."/>
            <person name="Coletta P.L."/>
            <person name="Lench N.J."/>
            <person name="Markham A.F."/>
        </authorList>
    </citation>
    <scope>NUCLEOTIDE SEQUENCE [MRNA]</scope>
</reference>
<reference key="3">
    <citation type="journal article" date="2005" name="Science">
        <title>The transcriptional landscape of the mammalian genome.</title>
        <authorList>
            <person name="Carninci P."/>
            <person name="Kasukawa T."/>
            <person name="Katayama S."/>
            <person name="Gough J."/>
            <person name="Frith M.C."/>
            <person name="Maeda N."/>
            <person name="Oyama R."/>
            <person name="Ravasi T."/>
            <person name="Lenhard B."/>
            <person name="Wells C."/>
            <person name="Kodzius R."/>
            <person name="Shimokawa K."/>
            <person name="Bajic V.B."/>
            <person name="Brenner S.E."/>
            <person name="Batalov S."/>
            <person name="Forrest A.R."/>
            <person name="Zavolan M."/>
            <person name="Davis M.J."/>
            <person name="Wilming L.G."/>
            <person name="Aidinis V."/>
            <person name="Allen J.E."/>
            <person name="Ambesi-Impiombato A."/>
            <person name="Apweiler R."/>
            <person name="Aturaliya R.N."/>
            <person name="Bailey T.L."/>
            <person name="Bansal M."/>
            <person name="Baxter L."/>
            <person name="Beisel K.W."/>
            <person name="Bersano T."/>
            <person name="Bono H."/>
            <person name="Chalk A.M."/>
            <person name="Chiu K.P."/>
            <person name="Choudhary V."/>
            <person name="Christoffels A."/>
            <person name="Clutterbuck D.R."/>
            <person name="Crowe M.L."/>
            <person name="Dalla E."/>
            <person name="Dalrymple B.P."/>
            <person name="de Bono B."/>
            <person name="Della Gatta G."/>
            <person name="di Bernardo D."/>
            <person name="Down T."/>
            <person name="Engstrom P."/>
            <person name="Fagiolini M."/>
            <person name="Faulkner G."/>
            <person name="Fletcher C.F."/>
            <person name="Fukushima T."/>
            <person name="Furuno M."/>
            <person name="Futaki S."/>
            <person name="Gariboldi M."/>
            <person name="Georgii-Hemming P."/>
            <person name="Gingeras T.R."/>
            <person name="Gojobori T."/>
            <person name="Green R.E."/>
            <person name="Gustincich S."/>
            <person name="Harbers M."/>
            <person name="Hayashi Y."/>
            <person name="Hensch T.K."/>
            <person name="Hirokawa N."/>
            <person name="Hill D."/>
            <person name="Huminiecki L."/>
            <person name="Iacono M."/>
            <person name="Ikeo K."/>
            <person name="Iwama A."/>
            <person name="Ishikawa T."/>
            <person name="Jakt M."/>
            <person name="Kanapin A."/>
            <person name="Katoh M."/>
            <person name="Kawasawa Y."/>
            <person name="Kelso J."/>
            <person name="Kitamura H."/>
            <person name="Kitano H."/>
            <person name="Kollias G."/>
            <person name="Krishnan S.P."/>
            <person name="Kruger A."/>
            <person name="Kummerfeld S.K."/>
            <person name="Kurochkin I.V."/>
            <person name="Lareau L.F."/>
            <person name="Lazarevic D."/>
            <person name="Lipovich L."/>
            <person name="Liu J."/>
            <person name="Liuni S."/>
            <person name="McWilliam S."/>
            <person name="Madan Babu M."/>
            <person name="Madera M."/>
            <person name="Marchionni L."/>
            <person name="Matsuda H."/>
            <person name="Matsuzawa S."/>
            <person name="Miki H."/>
            <person name="Mignone F."/>
            <person name="Miyake S."/>
            <person name="Morris K."/>
            <person name="Mottagui-Tabar S."/>
            <person name="Mulder N."/>
            <person name="Nakano N."/>
            <person name="Nakauchi H."/>
            <person name="Ng P."/>
            <person name="Nilsson R."/>
            <person name="Nishiguchi S."/>
            <person name="Nishikawa S."/>
            <person name="Nori F."/>
            <person name="Ohara O."/>
            <person name="Okazaki Y."/>
            <person name="Orlando V."/>
            <person name="Pang K.C."/>
            <person name="Pavan W.J."/>
            <person name="Pavesi G."/>
            <person name="Pesole G."/>
            <person name="Petrovsky N."/>
            <person name="Piazza S."/>
            <person name="Reed J."/>
            <person name="Reid J.F."/>
            <person name="Ring B.Z."/>
            <person name="Ringwald M."/>
            <person name="Rost B."/>
            <person name="Ruan Y."/>
            <person name="Salzberg S.L."/>
            <person name="Sandelin A."/>
            <person name="Schneider C."/>
            <person name="Schoenbach C."/>
            <person name="Sekiguchi K."/>
            <person name="Semple C.A."/>
            <person name="Seno S."/>
            <person name="Sessa L."/>
            <person name="Sheng Y."/>
            <person name="Shibata Y."/>
            <person name="Shimada H."/>
            <person name="Shimada K."/>
            <person name="Silva D."/>
            <person name="Sinclair B."/>
            <person name="Sperling S."/>
            <person name="Stupka E."/>
            <person name="Sugiura K."/>
            <person name="Sultana R."/>
            <person name="Takenaka Y."/>
            <person name="Taki K."/>
            <person name="Tammoja K."/>
            <person name="Tan S.L."/>
            <person name="Tang S."/>
            <person name="Taylor M.S."/>
            <person name="Tegner J."/>
            <person name="Teichmann S.A."/>
            <person name="Ueda H.R."/>
            <person name="van Nimwegen E."/>
            <person name="Verardo R."/>
            <person name="Wei C.L."/>
            <person name="Yagi K."/>
            <person name="Yamanishi H."/>
            <person name="Zabarovsky E."/>
            <person name="Zhu S."/>
            <person name="Zimmer A."/>
            <person name="Hide W."/>
            <person name="Bult C."/>
            <person name="Grimmond S.M."/>
            <person name="Teasdale R.D."/>
            <person name="Liu E.T."/>
            <person name="Brusic V."/>
            <person name="Quackenbush J."/>
            <person name="Wahlestedt C."/>
            <person name="Mattick J.S."/>
            <person name="Hume D.A."/>
            <person name="Kai C."/>
            <person name="Sasaki D."/>
            <person name="Tomaru Y."/>
            <person name="Fukuda S."/>
            <person name="Kanamori-Katayama M."/>
            <person name="Suzuki M."/>
            <person name="Aoki J."/>
            <person name="Arakawa T."/>
            <person name="Iida J."/>
            <person name="Imamura K."/>
            <person name="Itoh M."/>
            <person name="Kato T."/>
            <person name="Kawaji H."/>
            <person name="Kawagashira N."/>
            <person name="Kawashima T."/>
            <person name="Kojima M."/>
            <person name="Kondo S."/>
            <person name="Konno H."/>
            <person name="Nakano K."/>
            <person name="Ninomiya N."/>
            <person name="Nishio T."/>
            <person name="Okada M."/>
            <person name="Plessy C."/>
            <person name="Shibata K."/>
            <person name="Shiraki T."/>
            <person name="Suzuki S."/>
            <person name="Tagami M."/>
            <person name="Waki K."/>
            <person name="Watahiki A."/>
            <person name="Okamura-Oho Y."/>
            <person name="Suzuki H."/>
            <person name="Kawai J."/>
            <person name="Hayashizaki Y."/>
        </authorList>
    </citation>
    <scope>NUCLEOTIDE SEQUENCE [LARGE SCALE MRNA]</scope>
    <source>
        <strain>C57BL/6J</strain>
        <tissue>Testis</tissue>
    </source>
</reference>
<reference key="4">
    <citation type="journal article" date="2010" name="Cell">
        <title>A tissue-specific atlas of mouse protein phosphorylation and expression.</title>
        <authorList>
            <person name="Huttlin E.L."/>
            <person name="Jedrychowski M.P."/>
            <person name="Elias J.E."/>
            <person name="Goswami T."/>
            <person name="Rad R."/>
            <person name="Beausoleil S.A."/>
            <person name="Villen J."/>
            <person name="Haas W."/>
            <person name="Sowa M.E."/>
            <person name="Gygi S.P."/>
        </authorList>
    </citation>
    <scope>IDENTIFICATION BY MASS SPECTROMETRY [LARGE SCALE ANALYSIS]</scope>
    <source>
        <tissue>Brain</tissue>
        <tissue>Brown adipose tissue</tissue>
        <tissue>Heart</tissue>
        <tissue>Kidney</tissue>
        <tissue>Liver</tissue>
        <tissue>Lung</tissue>
        <tissue>Pancreas</tissue>
        <tissue>Spleen</tissue>
        <tissue>Testis</tissue>
    </source>
</reference>
<reference key="5">
    <citation type="journal article" date="2015" name="J. Immunol.">
        <title>Ndfip1 regulates itch ligase activity and airway inflammation via UbcH7.</title>
        <authorList>
            <person name="Kathania M."/>
            <person name="Zeng M."/>
            <person name="Yadav V.N."/>
            <person name="Moghaddam S.J."/>
            <person name="Yang B."/>
            <person name="Venuprasad K."/>
        </authorList>
    </citation>
    <scope>INTERACTION WITH NDFIP1</scope>
</reference>
<organism>
    <name type="scientific">Mus musculus</name>
    <name type="common">Mouse</name>
    <dbReference type="NCBI Taxonomy" id="10090"/>
    <lineage>
        <taxon>Eukaryota</taxon>
        <taxon>Metazoa</taxon>
        <taxon>Chordata</taxon>
        <taxon>Craniata</taxon>
        <taxon>Vertebrata</taxon>
        <taxon>Euteleostomi</taxon>
        <taxon>Mammalia</taxon>
        <taxon>Eutheria</taxon>
        <taxon>Euarchontoglires</taxon>
        <taxon>Glires</taxon>
        <taxon>Rodentia</taxon>
        <taxon>Myomorpha</taxon>
        <taxon>Muroidea</taxon>
        <taxon>Muridae</taxon>
        <taxon>Murinae</taxon>
        <taxon>Mus</taxon>
        <taxon>Mus</taxon>
    </lineage>
</organism>
<gene>
    <name type="primary">Ube2l3</name>
    <name type="synonym">Ubce7</name>
</gene>
<keyword id="KW-0007">Acetylation</keyword>
<keyword id="KW-0067">ATP-binding</keyword>
<keyword id="KW-0963">Cytoplasm</keyword>
<keyword id="KW-0547">Nucleotide-binding</keyword>
<keyword id="KW-0539">Nucleus</keyword>
<keyword id="KW-1185">Reference proteome</keyword>
<keyword id="KW-0804">Transcription</keyword>
<keyword id="KW-0805">Transcription regulation</keyword>
<keyword id="KW-0808">Transferase</keyword>
<keyword id="KW-0832">Ubl conjugation</keyword>
<keyword id="KW-0833">Ubl conjugation pathway</keyword>
<proteinExistence type="evidence at protein level"/>
<protein>
    <recommendedName>
        <fullName>Ubiquitin-conjugating enzyme E2 L3</fullName>
        <ecNumber>2.3.2.23</ecNumber>
    </recommendedName>
    <alternativeName>
        <fullName>E2 ubiquitin-conjugating enzyme L3</fullName>
    </alternativeName>
    <alternativeName>
        <fullName>UbcM4</fullName>
    </alternativeName>
    <alternativeName>
        <fullName>Ubiquitin carrier protein L3</fullName>
    </alternativeName>
    <alternativeName>
        <fullName>Ubiquitin-protein ligase L3</fullName>
    </alternativeName>
</protein>
<feature type="chain" id="PRO_0000082477" description="Ubiquitin-conjugating enzyme E2 L3">
    <location>
        <begin position="1"/>
        <end position="154"/>
    </location>
</feature>
<feature type="domain" description="UBC core" evidence="2">
    <location>
        <begin position="2"/>
        <end position="149"/>
    </location>
</feature>
<feature type="active site" description="Glycyl thioester intermediate" evidence="2 3">
    <location>
        <position position="86"/>
    </location>
</feature>
<feature type="modified residue" description="N6-acetyllysine" evidence="1">
    <location>
        <position position="131"/>
    </location>
</feature>
<feature type="sequence conflict" description="In Ref. 1; AAB36018." evidence="5" ref="1">
    <original>D</original>
    <variation>V</variation>
    <location>
        <position position="102"/>
    </location>
</feature>
<dbReference type="EC" id="2.3.2.23"/>
<dbReference type="EMBL" id="S81004">
    <property type="protein sequence ID" value="AAB36018.1"/>
    <property type="molecule type" value="Genomic_DNA"/>
</dbReference>
<dbReference type="EMBL" id="X97042">
    <property type="protein sequence ID" value="CAA65755.1"/>
    <property type="molecule type" value="mRNA"/>
</dbReference>
<dbReference type="EMBL" id="AJ130961">
    <property type="protein sequence ID" value="CAA10265.1"/>
    <property type="molecule type" value="mRNA"/>
</dbReference>
<dbReference type="EMBL" id="AK007265">
    <property type="protein sequence ID" value="BAB24925.1"/>
    <property type="molecule type" value="mRNA"/>
</dbReference>
<dbReference type="CCDS" id="CCDS27997.1"/>
<dbReference type="PIR" id="JC6163">
    <property type="entry name" value="JC6163"/>
</dbReference>
<dbReference type="RefSeq" id="NP_033482.1">
    <property type="nucleotide sequence ID" value="NM_009456.3"/>
</dbReference>
<dbReference type="BMRB" id="P68037"/>
<dbReference type="SMR" id="P68037"/>
<dbReference type="BioGRID" id="204407">
    <property type="interactions" value="24"/>
</dbReference>
<dbReference type="BioGRID" id="785616">
    <property type="interactions" value="1"/>
</dbReference>
<dbReference type="CORUM" id="P68037"/>
<dbReference type="FunCoup" id="P68037">
    <property type="interactions" value="3657"/>
</dbReference>
<dbReference type="IntAct" id="P68037">
    <property type="interactions" value="1"/>
</dbReference>
<dbReference type="MINT" id="P68037"/>
<dbReference type="STRING" id="10090.ENSMUSP00000156121"/>
<dbReference type="GlyGen" id="P68037">
    <property type="glycosylation" value="1 site, 1 O-linked glycan (1 site)"/>
</dbReference>
<dbReference type="iPTMnet" id="P68037"/>
<dbReference type="PhosphoSitePlus" id="P68037"/>
<dbReference type="SwissPalm" id="P68037"/>
<dbReference type="CPTAC" id="non-CPTAC-3679"/>
<dbReference type="jPOST" id="P68037"/>
<dbReference type="PaxDb" id="10090-ENSMUSP00000111363"/>
<dbReference type="PeptideAtlas" id="P68037"/>
<dbReference type="ProteomicsDB" id="298349"/>
<dbReference type="Pumba" id="P68037"/>
<dbReference type="DNASU" id="22195"/>
<dbReference type="Ensembl" id="ENSMUST00000090192.12">
    <property type="protein sequence ID" value="ENSMUSP00000087658.6"/>
    <property type="gene ID" value="ENSMUSG00000038965.18"/>
</dbReference>
<dbReference type="Ensembl" id="ENSMUST00000232139.2">
    <property type="protein sequence ID" value="ENSMUSP00000156121.2"/>
    <property type="gene ID" value="ENSMUSG00000038965.18"/>
</dbReference>
<dbReference type="GeneID" id="22195"/>
<dbReference type="KEGG" id="mmu:22195"/>
<dbReference type="UCSC" id="uc007ykl.1">
    <property type="organism name" value="mouse"/>
</dbReference>
<dbReference type="AGR" id="MGI:109240"/>
<dbReference type="CTD" id="7332"/>
<dbReference type="MGI" id="MGI:109240">
    <property type="gene designation" value="Ube2l3"/>
</dbReference>
<dbReference type="VEuPathDB" id="HostDB:ENSMUSG00000038965"/>
<dbReference type="eggNOG" id="KOG0422">
    <property type="taxonomic scope" value="Eukaryota"/>
</dbReference>
<dbReference type="GeneTree" id="ENSGT00940000153654"/>
<dbReference type="HOGENOM" id="CLU_030988_13_3_1"/>
<dbReference type="InParanoid" id="P68037"/>
<dbReference type="OMA" id="ADLHTWH"/>
<dbReference type="OrthoDB" id="9973183at2759"/>
<dbReference type="PhylomeDB" id="P68037"/>
<dbReference type="TreeFam" id="TF313043"/>
<dbReference type="Reactome" id="R-MMU-5205685">
    <property type="pathway name" value="PINK1-PRKN Mediated Mitophagy"/>
</dbReference>
<dbReference type="Reactome" id="R-MMU-5357905">
    <property type="pathway name" value="Regulation of TNFR1 signaling"/>
</dbReference>
<dbReference type="Reactome" id="R-MMU-5675482">
    <property type="pathway name" value="Regulation of necroptotic cell death"/>
</dbReference>
<dbReference type="Reactome" id="R-MMU-8866652">
    <property type="pathway name" value="Synthesis of active ubiquitin: roles of E1 and E2 enzymes"/>
</dbReference>
<dbReference type="Reactome" id="R-MMU-8866654">
    <property type="pathway name" value="E3 ubiquitin ligases ubiquitinate target proteins"/>
</dbReference>
<dbReference type="Reactome" id="R-MMU-983168">
    <property type="pathway name" value="Antigen processing: Ubiquitination &amp; Proteasome degradation"/>
</dbReference>
<dbReference type="UniPathway" id="UPA00143"/>
<dbReference type="BioGRID-ORCS" id="22195">
    <property type="hits" value="15 hits in 42 CRISPR screens"/>
</dbReference>
<dbReference type="ChiTaRS" id="Ube2l3">
    <property type="organism name" value="mouse"/>
</dbReference>
<dbReference type="PRO" id="PR:P68037"/>
<dbReference type="Proteomes" id="UP000000589">
    <property type="component" value="Chromosome 16"/>
</dbReference>
<dbReference type="RNAct" id="P68037">
    <property type="molecule type" value="protein"/>
</dbReference>
<dbReference type="Bgee" id="ENSMUSG00000038965">
    <property type="expression patterns" value="Expressed in spermatid and 267 other cell types or tissues"/>
</dbReference>
<dbReference type="ExpressionAtlas" id="P68037">
    <property type="expression patterns" value="baseline and differential"/>
</dbReference>
<dbReference type="GO" id="GO:0005737">
    <property type="term" value="C:cytoplasm"/>
    <property type="evidence" value="ECO:0000250"/>
    <property type="project" value="UniProtKB"/>
</dbReference>
<dbReference type="GO" id="GO:0005634">
    <property type="term" value="C:nucleus"/>
    <property type="evidence" value="ECO:0000250"/>
    <property type="project" value="UniProtKB"/>
</dbReference>
<dbReference type="GO" id="GO:0005524">
    <property type="term" value="F:ATP binding"/>
    <property type="evidence" value="ECO:0007669"/>
    <property type="project" value="UniProtKB-KW"/>
</dbReference>
<dbReference type="GO" id="GO:0003713">
    <property type="term" value="F:transcription coactivator activity"/>
    <property type="evidence" value="ECO:0000250"/>
    <property type="project" value="UniProtKB"/>
</dbReference>
<dbReference type="GO" id="GO:0061631">
    <property type="term" value="F:ubiquitin conjugating enzyme activity"/>
    <property type="evidence" value="ECO:0000314"/>
    <property type="project" value="MGI"/>
</dbReference>
<dbReference type="GO" id="GO:0031625">
    <property type="term" value="F:ubiquitin protein ligase binding"/>
    <property type="evidence" value="ECO:0007669"/>
    <property type="project" value="Ensembl"/>
</dbReference>
<dbReference type="GO" id="GO:0097027">
    <property type="term" value="F:ubiquitin-protein transferase activator activity"/>
    <property type="evidence" value="ECO:0007669"/>
    <property type="project" value="Ensembl"/>
</dbReference>
<dbReference type="GO" id="GO:0004842">
    <property type="term" value="F:ubiquitin-protein transferase activity"/>
    <property type="evidence" value="ECO:0000250"/>
    <property type="project" value="UniProtKB"/>
</dbReference>
<dbReference type="GO" id="GO:0044770">
    <property type="term" value="P:cell cycle phase transition"/>
    <property type="evidence" value="ECO:0000250"/>
    <property type="project" value="UniProtKB"/>
</dbReference>
<dbReference type="GO" id="GO:0008283">
    <property type="term" value="P:cell population proliferation"/>
    <property type="evidence" value="ECO:0000250"/>
    <property type="project" value="UniProtKB"/>
</dbReference>
<dbReference type="GO" id="GO:0071385">
    <property type="term" value="P:cellular response to glucocorticoid stimulus"/>
    <property type="evidence" value="ECO:0000250"/>
    <property type="project" value="UniProtKB"/>
</dbReference>
<dbReference type="GO" id="GO:0071383">
    <property type="term" value="P:cellular response to steroid hormone stimulus"/>
    <property type="evidence" value="ECO:0000250"/>
    <property type="project" value="UniProtKB"/>
</dbReference>
<dbReference type="GO" id="GO:0031398">
    <property type="term" value="P:positive regulation of protein ubiquitination"/>
    <property type="evidence" value="ECO:0007669"/>
    <property type="project" value="Ensembl"/>
</dbReference>
<dbReference type="GO" id="GO:0070979">
    <property type="term" value="P:protein K11-linked ubiquitination"/>
    <property type="evidence" value="ECO:0000250"/>
    <property type="project" value="UniProtKB"/>
</dbReference>
<dbReference type="GO" id="GO:0000209">
    <property type="term" value="P:protein polyubiquitination"/>
    <property type="evidence" value="ECO:0000250"/>
    <property type="project" value="UniProtKB"/>
</dbReference>
<dbReference type="GO" id="GO:0016567">
    <property type="term" value="P:protein ubiquitination"/>
    <property type="evidence" value="ECO:0000250"/>
    <property type="project" value="UniProtKB"/>
</dbReference>
<dbReference type="GO" id="GO:0006355">
    <property type="term" value="P:regulation of DNA-templated transcription"/>
    <property type="evidence" value="ECO:0000250"/>
    <property type="project" value="UniProtKB"/>
</dbReference>
<dbReference type="GO" id="GO:0006511">
    <property type="term" value="P:ubiquitin-dependent protein catabolic process"/>
    <property type="evidence" value="ECO:0000315"/>
    <property type="project" value="MGI"/>
</dbReference>
<dbReference type="CDD" id="cd23801">
    <property type="entry name" value="UBCc_UBE2L3"/>
    <property type="match status" value="1"/>
</dbReference>
<dbReference type="FunFam" id="3.10.110.10:FF:000011">
    <property type="entry name" value="Ubiquitin-conjugating enzyme E2 L3"/>
    <property type="match status" value="1"/>
</dbReference>
<dbReference type="Gene3D" id="3.10.110.10">
    <property type="entry name" value="Ubiquitin Conjugating Enzyme"/>
    <property type="match status" value="1"/>
</dbReference>
<dbReference type="InterPro" id="IPR050113">
    <property type="entry name" value="Ub_conjugating_enzyme"/>
</dbReference>
<dbReference type="InterPro" id="IPR000608">
    <property type="entry name" value="UBQ-conjugat_E2_core"/>
</dbReference>
<dbReference type="InterPro" id="IPR023313">
    <property type="entry name" value="UBQ-conjugating_AS"/>
</dbReference>
<dbReference type="InterPro" id="IPR016135">
    <property type="entry name" value="UBQ-conjugating_enzyme/RWD"/>
</dbReference>
<dbReference type="PANTHER" id="PTHR24067">
    <property type="entry name" value="UBIQUITIN-CONJUGATING ENZYME E2"/>
    <property type="match status" value="1"/>
</dbReference>
<dbReference type="Pfam" id="PF00179">
    <property type="entry name" value="UQ_con"/>
    <property type="match status" value="1"/>
</dbReference>
<dbReference type="SMART" id="SM00212">
    <property type="entry name" value="UBCc"/>
    <property type="match status" value="1"/>
</dbReference>
<dbReference type="SUPFAM" id="SSF54495">
    <property type="entry name" value="UBC-like"/>
    <property type="match status" value="1"/>
</dbReference>
<dbReference type="PROSITE" id="PS00183">
    <property type="entry name" value="UBC_1"/>
    <property type="match status" value="1"/>
</dbReference>
<dbReference type="PROSITE" id="PS50127">
    <property type="entry name" value="UBC_2"/>
    <property type="match status" value="1"/>
</dbReference>
<sequence length="154" mass="17862">MAASRRLMKELEEIRKCGMKNFRNIQVDEANLLTWQGLIVPDNPPYDKGAFRIEINFPAEYPFKPPKITFKTKIYHPNIDEKGQVCLPVISAENWKPATKTDQVIQSLIALVNDPQPEHPLRADLAEEYSKDRKKFCKNAEEFTKKYGEKRPVD</sequence>
<evidence type="ECO:0000250" key="1">
    <source>
        <dbReference type="UniProtKB" id="P68036"/>
    </source>
</evidence>
<evidence type="ECO:0000255" key="2">
    <source>
        <dbReference type="PROSITE-ProRule" id="PRU00388"/>
    </source>
</evidence>
<evidence type="ECO:0000255" key="3">
    <source>
        <dbReference type="PROSITE-ProRule" id="PRU10133"/>
    </source>
</evidence>
<evidence type="ECO:0000269" key="4">
    <source>
    </source>
</evidence>
<evidence type="ECO:0000305" key="5"/>
<name>UB2L3_MOUSE</name>
<comment type="function">
    <text evidence="1">Ubiquitin-conjugating enzyme E2 that specifically acts with HECT-type and RBR family E3 ubiquitin-protein ligases. Does not function with most RING-containing E3 ubiquitin-protein ligases because it lacks intrinsic E3-independent reactivity with lysine: in contrast, it has activity with the RBR family E3 enzymes, such as PRKN, RNF31 and ARIH1, that function like RING-HECT hybrids. Accepts ubiquitin from the E1 complex and catalyzes its covalent attachment to other proteins. Mediates ubiquitination by the CUL9-RBX1 complex (By similarity). In vitro catalyzes 'Lys-11'-linked polyubiquitination. Involved in the selective degradation of short-lived and abnormal proteins. Down-regulated during the S-phase it is involved in progression through the cell cycle. Regulates nuclear hormone receptors transcriptional activity. May play a role in myelopoiesis.</text>
</comment>
<comment type="catalytic activity">
    <reaction evidence="2 3">
        <text>S-ubiquitinyl-[E1 ubiquitin-activating enzyme]-L-cysteine + [E2 ubiquitin-conjugating enzyme]-L-cysteine = [E1 ubiquitin-activating enzyme]-L-cysteine + S-ubiquitinyl-[E2 ubiquitin-conjugating enzyme]-L-cysteine.</text>
        <dbReference type="EC" id="2.3.2.23"/>
    </reaction>
</comment>
<comment type="pathway">
    <text evidence="2">Protein modification; protein ubiquitination.</text>
</comment>
<comment type="subunit">
    <text evidence="1 4">Interacts with PRKN; involved in ubiquitination and degradation of misfolded proteins. Interacts with UBE3A. Interacts with CCNB1IP1, CBL, ZAP70, RNF19A, RNF19B and RNF144B. Interacts with ARIH1. Interacts with ARIH2 (via RING-type 1). Interacts with NCOA1; they functionally interact to regulate progesterone receptor transcriptional activity. Interacts with NDFIP1 (via N-terminus); the interaction mediates recruitment of UBE2L3 to ITCH and causes MAP3K7 ubiquitination (PubMed:25632008).</text>
</comment>
<comment type="subcellular location">
    <subcellularLocation>
        <location evidence="1">Nucleus</location>
    </subcellularLocation>
    <subcellularLocation>
        <location evidence="1">Cytoplasm</location>
    </subcellularLocation>
</comment>
<comment type="domain">
    <text evidence="1">In contrast to other ubiquitin-conjugating enzymes E2, residues essential for lysine reactivity are absent: Pro and a His residues are present instead of an Asp and an Asp residues in positions 88 and 119, respectively.</text>
</comment>
<comment type="PTM">
    <text evidence="1">Ubiquitinated. The alteration of UBE2L3 protein levels during the S-phase of the cell cycle is due to ubiquitin-dependent proteasomal degradation. Autoubiquitinated in vitro.</text>
</comment>
<comment type="similarity">
    <text evidence="2">Belongs to the ubiquitin-conjugating enzyme family.</text>
</comment>